<comment type="function">
    <text evidence="1">Promotes RNA polymerase assembly. Latches the N- and C-terminal regions of the beta' subunit thereby facilitating its interaction with the beta and alpha subunits.</text>
</comment>
<comment type="catalytic activity">
    <reaction evidence="1">
        <text>RNA(n) + a ribonucleoside 5'-triphosphate = RNA(n+1) + diphosphate</text>
        <dbReference type="Rhea" id="RHEA:21248"/>
        <dbReference type="Rhea" id="RHEA-COMP:14527"/>
        <dbReference type="Rhea" id="RHEA-COMP:17342"/>
        <dbReference type="ChEBI" id="CHEBI:33019"/>
        <dbReference type="ChEBI" id="CHEBI:61557"/>
        <dbReference type="ChEBI" id="CHEBI:140395"/>
        <dbReference type="EC" id="2.7.7.6"/>
    </reaction>
</comment>
<comment type="subunit">
    <text evidence="1">The RNAP catalytic core consists of 2 alpha, 1 beta, 1 beta' and 1 omega subunit. When a sigma factor is associated with the core the holoenzyme is formed, which can initiate transcription.</text>
</comment>
<comment type="similarity">
    <text evidence="1">Belongs to the RNA polymerase subunit omega family.</text>
</comment>
<name>RPOZ_DESAH</name>
<evidence type="ECO:0000255" key="1">
    <source>
        <dbReference type="HAMAP-Rule" id="MF_00366"/>
    </source>
</evidence>
<keyword id="KW-0240">DNA-directed RNA polymerase</keyword>
<keyword id="KW-0548">Nucleotidyltransferase</keyword>
<keyword id="KW-1185">Reference proteome</keyword>
<keyword id="KW-0804">Transcription</keyword>
<keyword id="KW-0808">Transferase</keyword>
<proteinExistence type="inferred from homology"/>
<dbReference type="EC" id="2.7.7.6" evidence="1"/>
<dbReference type="EMBL" id="CP001087">
    <property type="protein sequence ID" value="ACN16119.1"/>
    <property type="molecule type" value="Genomic_DNA"/>
</dbReference>
<dbReference type="RefSeq" id="WP_015904881.1">
    <property type="nucleotide sequence ID" value="NC_012108.1"/>
</dbReference>
<dbReference type="SMR" id="C0QKM9"/>
<dbReference type="STRING" id="177437.HRM2_30360"/>
<dbReference type="KEGG" id="dat:HRM2_30360"/>
<dbReference type="eggNOG" id="COG1758">
    <property type="taxonomic scope" value="Bacteria"/>
</dbReference>
<dbReference type="HOGENOM" id="CLU_125406_5_1_7"/>
<dbReference type="OrthoDB" id="9796300at2"/>
<dbReference type="Proteomes" id="UP000000442">
    <property type="component" value="Chromosome"/>
</dbReference>
<dbReference type="GO" id="GO:0000428">
    <property type="term" value="C:DNA-directed RNA polymerase complex"/>
    <property type="evidence" value="ECO:0007669"/>
    <property type="project" value="UniProtKB-KW"/>
</dbReference>
<dbReference type="GO" id="GO:0003677">
    <property type="term" value="F:DNA binding"/>
    <property type="evidence" value="ECO:0007669"/>
    <property type="project" value="UniProtKB-UniRule"/>
</dbReference>
<dbReference type="GO" id="GO:0003899">
    <property type="term" value="F:DNA-directed RNA polymerase activity"/>
    <property type="evidence" value="ECO:0007669"/>
    <property type="project" value="UniProtKB-UniRule"/>
</dbReference>
<dbReference type="GO" id="GO:0006351">
    <property type="term" value="P:DNA-templated transcription"/>
    <property type="evidence" value="ECO:0007669"/>
    <property type="project" value="UniProtKB-UniRule"/>
</dbReference>
<dbReference type="Gene3D" id="3.90.940.10">
    <property type="match status" value="1"/>
</dbReference>
<dbReference type="HAMAP" id="MF_00366">
    <property type="entry name" value="RNApol_bact_RpoZ"/>
    <property type="match status" value="1"/>
</dbReference>
<dbReference type="InterPro" id="IPR003716">
    <property type="entry name" value="DNA-dir_RNA_pol_omega"/>
</dbReference>
<dbReference type="InterPro" id="IPR006110">
    <property type="entry name" value="Pol_omega/Rpo6/RPB6"/>
</dbReference>
<dbReference type="InterPro" id="IPR036161">
    <property type="entry name" value="RPB6/omega-like_sf"/>
</dbReference>
<dbReference type="NCBIfam" id="TIGR00690">
    <property type="entry name" value="rpoZ"/>
    <property type="match status" value="1"/>
</dbReference>
<dbReference type="PANTHER" id="PTHR34476">
    <property type="entry name" value="DNA-DIRECTED RNA POLYMERASE SUBUNIT OMEGA"/>
    <property type="match status" value="1"/>
</dbReference>
<dbReference type="PANTHER" id="PTHR34476:SF1">
    <property type="entry name" value="DNA-DIRECTED RNA POLYMERASE SUBUNIT OMEGA"/>
    <property type="match status" value="1"/>
</dbReference>
<dbReference type="Pfam" id="PF01192">
    <property type="entry name" value="RNA_pol_Rpb6"/>
    <property type="match status" value="1"/>
</dbReference>
<dbReference type="SMART" id="SM01409">
    <property type="entry name" value="RNA_pol_Rpb6"/>
    <property type="match status" value="1"/>
</dbReference>
<dbReference type="SUPFAM" id="SSF63562">
    <property type="entry name" value="RPB6/omega subunit-like"/>
    <property type="match status" value="1"/>
</dbReference>
<reference key="1">
    <citation type="journal article" date="2009" name="Environ. Microbiol.">
        <title>Genome sequence of Desulfobacterium autotrophicum HRM2, a marine sulfate reducer oxidizing organic carbon completely to carbon dioxide.</title>
        <authorList>
            <person name="Strittmatter A.W."/>
            <person name="Liesegang H."/>
            <person name="Rabus R."/>
            <person name="Decker I."/>
            <person name="Amann J."/>
            <person name="Andres S."/>
            <person name="Henne A."/>
            <person name="Fricke W.F."/>
            <person name="Martinez-Arias R."/>
            <person name="Bartels D."/>
            <person name="Goesmann A."/>
            <person name="Krause L."/>
            <person name="Puehler A."/>
            <person name="Klenk H.P."/>
            <person name="Richter M."/>
            <person name="Schuler M."/>
            <person name="Gloeckner F.O."/>
            <person name="Meyerdierks A."/>
            <person name="Gottschalk G."/>
            <person name="Amann R."/>
        </authorList>
    </citation>
    <scope>NUCLEOTIDE SEQUENCE [LARGE SCALE GENOMIC DNA]</scope>
    <source>
        <strain>ATCC 43914 / DSM 3382 / VKM B-1955 / HRM2</strain>
    </source>
</reference>
<feature type="chain" id="PRO_1000205513" description="DNA-directed RNA polymerase subunit omega">
    <location>
        <begin position="1"/>
        <end position="68"/>
    </location>
</feature>
<sequence length="68" mass="7596">MARVTIEDCLKNVPSRFALVHMAALRVRQLREGADLLIKPSKNEDAVIALREIAANRIVLKNKSDKKG</sequence>
<protein>
    <recommendedName>
        <fullName evidence="1">DNA-directed RNA polymerase subunit omega</fullName>
        <shortName evidence="1">RNAP omega subunit</shortName>
        <ecNumber evidence="1">2.7.7.6</ecNumber>
    </recommendedName>
    <alternativeName>
        <fullName evidence="1">RNA polymerase omega subunit</fullName>
    </alternativeName>
    <alternativeName>
        <fullName evidence="1">Transcriptase subunit omega</fullName>
    </alternativeName>
</protein>
<gene>
    <name evidence="1" type="primary">rpoZ</name>
    <name type="ordered locus">HRM2_30360</name>
</gene>
<accession>C0QKM9</accession>
<organism>
    <name type="scientific">Desulforapulum autotrophicum (strain ATCC 43914 / DSM 3382 / VKM B-1955 / HRM2)</name>
    <name type="common">Desulfobacterium autotrophicum</name>
    <dbReference type="NCBI Taxonomy" id="177437"/>
    <lineage>
        <taxon>Bacteria</taxon>
        <taxon>Pseudomonadati</taxon>
        <taxon>Thermodesulfobacteriota</taxon>
        <taxon>Desulfobacteria</taxon>
        <taxon>Desulfobacterales</taxon>
        <taxon>Desulfobacteraceae</taxon>
        <taxon>Desulforapulum</taxon>
    </lineage>
</organism>